<name>PSAJ_TETOB</name>
<comment type="function">
    <text evidence="1">May help in the organization of the PsaE and PsaF subunits.</text>
</comment>
<comment type="subcellular location">
    <subcellularLocation>
        <location evidence="1">Plastid</location>
        <location evidence="1">Chloroplast thylakoid membrane</location>
        <topology evidence="1">Single-pass membrane protein</topology>
    </subcellularLocation>
</comment>
<comment type="similarity">
    <text evidence="1">Belongs to the PsaJ family.</text>
</comment>
<dbReference type="EMBL" id="DQ396875">
    <property type="protein sequence ID" value="ABD48237.1"/>
    <property type="molecule type" value="Genomic_DNA"/>
</dbReference>
<dbReference type="RefSeq" id="YP_635955.1">
    <property type="nucleotide sequence ID" value="NC_008101.1"/>
</dbReference>
<dbReference type="SMR" id="Q1KVW9"/>
<dbReference type="GeneID" id="4099822"/>
<dbReference type="GO" id="GO:0009535">
    <property type="term" value="C:chloroplast thylakoid membrane"/>
    <property type="evidence" value="ECO:0007669"/>
    <property type="project" value="UniProtKB-SubCell"/>
</dbReference>
<dbReference type="GO" id="GO:0009522">
    <property type="term" value="C:photosystem I"/>
    <property type="evidence" value="ECO:0007669"/>
    <property type="project" value="UniProtKB-KW"/>
</dbReference>
<dbReference type="GO" id="GO:0015979">
    <property type="term" value="P:photosynthesis"/>
    <property type="evidence" value="ECO:0007669"/>
    <property type="project" value="UniProtKB-UniRule"/>
</dbReference>
<dbReference type="Gene3D" id="1.20.5.510">
    <property type="entry name" value="Single helix bin"/>
    <property type="match status" value="1"/>
</dbReference>
<dbReference type="HAMAP" id="MF_00522">
    <property type="entry name" value="PSI_PsaJ"/>
    <property type="match status" value="1"/>
</dbReference>
<dbReference type="InterPro" id="IPR002615">
    <property type="entry name" value="PSI_PsaJ"/>
</dbReference>
<dbReference type="InterPro" id="IPR036062">
    <property type="entry name" value="PSI_PsaJ_sf"/>
</dbReference>
<dbReference type="PANTHER" id="PTHR36082">
    <property type="match status" value="1"/>
</dbReference>
<dbReference type="PANTHER" id="PTHR36082:SF2">
    <property type="entry name" value="PHOTOSYSTEM I REACTION CENTER SUBUNIT IX"/>
    <property type="match status" value="1"/>
</dbReference>
<dbReference type="Pfam" id="PF01701">
    <property type="entry name" value="PSI_PsaJ"/>
    <property type="match status" value="1"/>
</dbReference>
<dbReference type="SUPFAM" id="SSF81544">
    <property type="entry name" value="Subunit IX of photosystem I reaction centre, PsaJ"/>
    <property type="match status" value="1"/>
</dbReference>
<gene>
    <name evidence="1" type="primary">psaJ</name>
</gene>
<accession>Q1KVW9</accession>
<sequence>MKNFTTYLSTAPVVATGWFIVTAALLIEINRFFPDPLVFSF</sequence>
<proteinExistence type="inferred from homology"/>
<organism>
    <name type="scientific">Tetradesmus obliquus</name>
    <name type="common">Green alga</name>
    <name type="synonym">Acutodesmus obliquus</name>
    <dbReference type="NCBI Taxonomy" id="3088"/>
    <lineage>
        <taxon>Eukaryota</taxon>
        <taxon>Viridiplantae</taxon>
        <taxon>Chlorophyta</taxon>
        <taxon>core chlorophytes</taxon>
        <taxon>Chlorophyceae</taxon>
        <taxon>CS clade</taxon>
        <taxon>Sphaeropleales</taxon>
        <taxon>Scenedesmaceae</taxon>
        <taxon>Tetradesmus</taxon>
    </lineage>
</organism>
<protein>
    <recommendedName>
        <fullName evidence="1">Photosystem I reaction center subunit IX</fullName>
    </recommendedName>
    <alternativeName>
        <fullName evidence="1">PSI-J</fullName>
    </alternativeName>
</protein>
<reference key="1">
    <citation type="journal article" date="2006" name="BMC Evol. Biol.">
        <title>The complete chloroplast genome sequence of the chlorophycean green alga Scenedesmus obliquus reveals a compact gene organization and a biased distribution of genes on the two DNA strands.</title>
        <authorList>
            <person name="de Cambiaire J.-C."/>
            <person name="Otis C."/>
            <person name="Lemieux C."/>
            <person name="Turmel M."/>
        </authorList>
    </citation>
    <scope>NUCLEOTIDE SEQUENCE [LARGE SCALE GENOMIC DNA]</scope>
    <source>
        <strain>UTEX 393</strain>
    </source>
</reference>
<evidence type="ECO:0000255" key="1">
    <source>
        <dbReference type="HAMAP-Rule" id="MF_00522"/>
    </source>
</evidence>
<feature type="chain" id="PRO_0000276074" description="Photosystem I reaction center subunit IX">
    <location>
        <begin position="1"/>
        <end position="41"/>
    </location>
</feature>
<feature type="transmembrane region" description="Helical" evidence="1">
    <location>
        <begin position="7"/>
        <end position="27"/>
    </location>
</feature>
<keyword id="KW-0150">Chloroplast</keyword>
<keyword id="KW-0472">Membrane</keyword>
<keyword id="KW-0602">Photosynthesis</keyword>
<keyword id="KW-0603">Photosystem I</keyword>
<keyword id="KW-0934">Plastid</keyword>
<keyword id="KW-0793">Thylakoid</keyword>
<keyword id="KW-0812">Transmembrane</keyword>
<keyword id="KW-1133">Transmembrane helix</keyword>
<geneLocation type="chloroplast"/>